<proteinExistence type="inferred from homology"/>
<keyword id="KW-0687">Ribonucleoprotein</keyword>
<keyword id="KW-0689">Ribosomal protein</keyword>
<keyword id="KW-0694">RNA-binding</keyword>
<keyword id="KW-0699">rRNA-binding</keyword>
<keyword id="KW-0820">tRNA-binding</keyword>
<organism>
    <name type="scientific">Sinorhizobium medicae (strain WSM419)</name>
    <name type="common">Ensifer medicae</name>
    <dbReference type="NCBI Taxonomy" id="366394"/>
    <lineage>
        <taxon>Bacteria</taxon>
        <taxon>Pseudomonadati</taxon>
        <taxon>Pseudomonadota</taxon>
        <taxon>Alphaproteobacteria</taxon>
        <taxon>Hyphomicrobiales</taxon>
        <taxon>Rhizobiaceae</taxon>
        <taxon>Sinorhizobium/Ensifer group</taxon>
        <taxon>Sinorhizobium</taxon>
    </lineage>
</organism>
<dbReference type="EMBL" id="CP000738">
    <property type="protein sequence ID" value="ABR59846.1"/>
    <property type="molecule type" value="Genomic_DNA"/>
</dbReference>
<dbReference type="RefSeq" id="WP_011975175.1">
    <property type="nucleotide sequence ID" value="NC_009636.1"/>
</dbReference>
<dbReference type="RefSeq" id="YP_001326681.1">
    <property type="nucleotide sequence ID" value="NC_009636.1"/>
</dbReference>
<dbReference type="SMR" id="A6U866"/>
<dbReference type="STRING" id="366394.Smed_0993"/>
<dbReference type="GeneID" id="61614923"/>
<dbReference type="KEGG" id="smd:Smed_0993"/>
<dbReference type="PATRIC" id="fig|366394.8.peg.4114"/>
<dbReference type="eggNOG" id="COG0197">
    <property type="taxonomic scope" value="Bacteria"/>
</dbReference>
<dbReference type="HOGENOM" id="CLU_078858_2_1_5"/>
<dbReference type="OrthoDB" id="9802589at2"/>
<dbReference type="Proteomes" id="UP000001108">
    <property type="component" value="Chromosome"/>
</dbReference>
<dbReference type="GO" id="GO:0022625">
    <property type="term" value="C:cytosolic large ribosomal subunit"/>
    <property type="evidence" value="ECO:0007669"/>
    <property type="project" value="TreeGrafter"/>
</dbReference>
<dbReference type="GO" id="GO:0019843">
    <property type="term" value="F:rRNA binding"/>
    <property type="evidence" value="ECO:0007669"/>
    <property type="project" value="UniProtKB-UniRule"/>
</dbReference>
<dbReference type="GO" id="GO:0003735">
    <property type="term" value="F:structural constituent of ribosome"/>
    <property type="evidence" value="ECO:0007669"/>
    <property type="project" value="InterPro"/>
</dbReference>
<dbReference type="GO" id="GO:0000049">
    <property type="term" value="F:tRNA binding"/>
    <property type="evidence" value="ECO:0007669"/>
    <property type="project" value="UniProtKB-KW"/>
</dbReference>
<dbReference type="GO" id="GO:0006412">
    <property type="term" value="P:translation"/>
    <property type="evidence" value="ECO:0007669"/>
    <property type="project" value="UniProtKB-UniRule"/>
</dbReference>
<dbReference type="CDD" id="cd01433">
    <property type="entry name" value="Ribosomal_L16_L10e"/>
    <property type="match status" value="1"/>
</dbReference>
<dbReference type="FunFam" id="3.90.1170.10:FF:000001">
    <property type="entry name" value="50S ribosomal protein L16"/>
    <property type="match status" value="1"/>
</dbReference>
<dbReference type="Gene3D" id="3.90.1170.10">
    <property type="entry name" value="Ribosomal protein L10e/L16"/>
    <property type="match status" value="1"/>
</dbReference>
<dbReference type="HAMAP" id="MF_01342">
    <property type="entry name" value="Ribosomal_uL16"/>
    <property type="match status" value="1"/>
</dbReference>
<dbReference type="InterPro" id="IPR047873">
    <property type="entry name" value="Ribosomal_uL16"/>
</dbReference>
<dbReference type="InterPro" id="IPR000114">
    <property type="entry name" value="Ribosomal_uL16_bact-type"/>
</dbReference>
<dbReference type="InterPro" id="IPR020798">
    <property type="entry name" value="Ribosomal_uL16_CS"/>
</dbReference>
<dbReference type="InterPro" id="IPR016180">
    <property type="entry name" value="Ribosomal_uL16_dom"/>
</dbReference>
<dbReference type="InterPro" id="IPR036920">
    <property type="entry name" value="Ribosomal_uL16_sf"/>
</dbReference>
<dbReference type="NCBIfam" id="TIGR01164">
    <property type="entry name" value="rplP_bact"/>
    <property type="match status" value="1"/>
</dbReference>
<dbReference type="PANTHER" id="PTHR12220">
    <property type="entry name" value="50S/60S RIBOSOMAL PROTEIN L16"/>
    <property type="match status" value="1"/>
</dbReference>
<dbReference type="PANTHER" id="PTHR12220:SF13">
    <property type="entry name" value="LARGE RIBOSOMAL SUBUNIT PROTEIN UL16M"/>
    <property type="match status" value="1"/>
</dbReference>
<dbReference type="Pfam" id="PF00252">
    <property type="entry name" value="Ribosomal_L16"/>
    <property type="match status" value="1"/>
</dbReference>
<dbReference type="PRINTS" id="PR00060">
    <property type="entry name" value="RIBOSOMALL16"/>
</dbReference>
<dbReference type="SUPFAM" id="SSF54686">
    <property type="entry name" value="Ribosomal protein L16p/L10e"/>
    <property type="match status" value="1"/>
</dbReference>
<dbReference type="PROSITE" id="PS00586">
    <property type="entry name" value="RIBOSOMAL_L16_1"/>
    <property type="match status" value="1"/>
</dbReference>
<dbReference type="PROSITE" id="PS00701">
    <property type="entry name" value="RIBOSOMAL_L16_2"/>
    <property type="match status" value="1"/>
</dbReference>
<sequence>MLQPKRTKYRKQFKGRIKGVAKGGSDLAFGEFGLKAQEPNRVNAREIEAARRAITRHMKRAGRVWIRVFPDVPVTAKPTEVRMGKGKGSVEYWACKVKPGRMMFEIDGVSEELAREALRLGAAKLSVKTRFVQRIAE</sequence>
<comment type="function">
    <text evidence="1">Binds 23S rRNA and is also seen to make contacts with the A and possibly P site tRNAs.</text>
</comment>
<comment type="subunit">
    <text evidence="1">Part of the 50S ribosomal subunit.</text>
</comment>
<comment type="similarity">
    <text evidence="1">Belongs to the universal ribosomal protein uL16 family.</text>
</comment>
<gene>
    <name evidence="1" type="primary">rplP</name>
    <name type="ordered locus">Smed_0993</name>
</gene>
<name>RL16_SINMW</name>
<protein>
    <recommendedName>
        <fullName evidence="1">Large ribosomal subunit protein uL16</fullName>
    </recommendedName>
    <alternativeName>
        <fullName evidence="2">50S ribosomal protein L16</fullName>
    </alternativeName>
</protein>
<accession>A6U866</accession>
<evidence type="ECO:0000255" key="1">
    <source>
        <dbReference type="HAMAP-Rule" id="MF_01342"/>
    </source>
</evidence>
<evidence type="ECO:0000305" key="2"/>
<reference key="1">
    <citation type="submission" date="2007-06" db="EMBL/GenBank/DDBJ databases">
        <title>Complete sequence of Sinorhizobium medicae WSM419 chromosome.</title>
        <authorList>
            <consortium name="US DOE Joint Genome Institute"/>
            <person name="Copeland A."/>
            <person name="Lucas S."/>
            <person name="Lapidus A."/>
            <person name="Barry K."/>
            <person name="Glavina del Rio T."/>
            <person name="Dalin E."/>
            <person name="Tice H."/>
            <person name="Pitluck S."/>
            <person name="Chain P."/>
            <person name="Malfatti S."/>
            <person name="Shin M."/>
            <person name="Vergez L."/>
            <person name="Schmutz J."/>
            <person name="Larimer F."/>
            <person name="Land M."/>
            <person name="Hauser L."/>
            <person name="Kyrpides N."/>
            <person name="Mikhailova N."/>
            <person name="Reeve W.G."/>
            <person name="Richardson P."/>
        </authorList>
    </citation>
    <scope>NUCLEOTIDE SEQUENCE [LARGE SCALE GENOMIC DNA]</scope>
    <source>
        <strain>WSM419</strain>
    </source>
</reference>
<feature type="chain" id="PRO_1000054710" description="Large ribosomal subunit protein uL16">
    <location>
        <begin position="1"/>
        <end position="137"/>
    </location>
</feature>